<evidence type="ECO:0000250" key="1"/>
<evidence type="ECO:0000256" key="2">
    <source>
        <dbReference type="SAM" id="MobiDB-lite"/>
    </source>
</evidence>
<evidence type="ECO:0000305" key="3"/>
<sequence length="106" mass="12146">MVNIPKTRRTYCKGKACRKHTPHKVTQYKKGKDSLSAQGKRRYDRKQSGYGGQTKPVFHKKAKTTKKVVLRLECTVCKTKHQLALKRCKHFELGGDKKQRGAAISF</sequence>
<gene>
    <name type="primary">RPL44</name>
    <name type="synonym">RPL41</name>
    <name type="ordered locus">CNBJ0405</name>
</gene>
<reference key="1">
    <citation type="journal article" date="2000" name="Yeast">
        <title>Characterization of the L41 gene in Cryptococcus neoformans: its application as a selectable transformation marker for cycloheximide resistance.</title>
        <authorList>
            <person name="Varma A."/>
            <person name="Kwon-Chung K.J."/>
        </authorList>
    </citation>
    <scope>NUCLEOTIDE SEQUENCE [GENOMIC DNA / MRNA]</scope>
    <source>
        <strain>B-3501</strain>
    </source>
</reference>
<reference key="2">
    <citation type="journal article" date="2005" name="Science">
        <title>The genome of the basidiomycetous yeast and human pathogen Cryptococcus neoformans.</title>
        <authorList>
            <person name="Loftus B.J."/>
            <person name="Fung E."/>
            <person name="Roncaglia P."/>
            <person name="Rowley D."/>
            <person name="Amedeo P."/>
            <person name="Bruno D."/>
            <person name="Vamathevan J."/>
            <person name="Miranda M."/>
            <person name="Anderson I.J."/>
            <person name="Fraser J.A."/>
            <person name="Allen J.E."/>
            <person name="Bosdet I.E."/>
            <person name="Brent M.R."/>
            <person name="Chiu R."/>
            <person name="Doering T.L."/>
            <person name="Donlin M.J."/>
            <person name="D'Souza C.A."/>
            <person name="Fox D.S."/>
            <person name="Grinberg V."/>
            <person name="Fu J."/>
            <person name="Fukushima M."/>
            <person name="Haas B.J."/>
            <person name="Huang J.C."/>
            <person name="Janbon G."/>
            <person name="Jones S.J.M."/>
            <person name="Koo H.L."/>
            <person name="Krzywinski M.I."/>
            <person name="Kwon-Chung K.J."/>
            <person name="Lengeler K.B."/>
            <person name="Maiti R."/>
            <person name="Marra M.A."/>
            <person name="Marra R.E."/>
            <person name="Mathewson C.A."/>
            <person name="Mitchell T.G."/>
            <person name="Pertea M."/>
            <person name="Riggs F.R."/>
            <person name="Salzberg S.L."/>
            <person name="Schein J.E."/>
            <person name="Shvartsbeyn A."/>
            <person name="Shin H."/>
            <person name="Shumway M."/>
            <person name="Specht C.A."/>
            <person name="Suh B.B."/>
            <person name="Tenney A."/>
            <person name="Utterback T.R."/>
            <person name="Wickes B.L."/>
            <person name="Wortman J.R."/>
            <person name="Wye N.H."/>
            <person name="Kronstad J.W."/>
            <person name="Lodge J.K."/>
            <person name="Heitman J."/>
            <person name="Davis R.W."/>
            <person name="Fraser C.M."/>
            <person name="Hyman R.W."/>
        </authorList>
    </citation>
    <scope>NUCLEOTIDE SEQUENCE [LARGE SCALE GENOMIC DNA]</scope>
    <source>
        <strain>B-3501A</strain>
    </source>
</reference>
<feature type="initiator methionine" description="Removed" evidence="1">
    <location>
        <position position="1"/>
    </location>
</feature>
<feature type="chain" id="PRO_0000410236" description="Large ribosomal subunit protein eL42">
    <location>
        <begin position="2"/>
        <end position="106"/>
    </location>
</feature>
<feature type="region of interest" description="Disordered" evidence="2">
    <location>
        <begin position="1"/>
        <end position="56"/>
    </location>
</feature>
<feature type="compositionally biased region" description="Basic residues" evidence="2">
    <location>
        <begin position="1"/>
        <end position="29"/>
    </location>
</feature>
<comment type="miscellaneous">
    <text>Cycloheximide sensitive type.</text>
</comment>
<comment type="similarity">
    <text evidence="3">Belongs to the eukaryotic ribosomal protein eL42 family.</text>
</comment>
<accession>P0CQ51</accession>
<accession>Q9HF88</accession>
<organism>
    <name type="scientific">Cryptococcus neoformans var. neoformans serotype D (strain B-3501A)</name>
    <name type="common">Filobasidiella neoformans</name>
    <dbReference type="NCBI Taxonomy" id="283643"/>
    <lineage>
        <taxon>Eukaryota</taxon>
        <taxon>Fungi</taxon>
        <taxon>Dikarya</taxon>
        <taxon>Basidiomycota</taxon>
        <taxon>Agaricomycotina</taxon>
        <taxon>Tremellomycetes</taxon>
        <taxon>Tremellales</taxon>
        <taxon>Cryptococcaceae</taxon>
        <taxon>Cryptococcus</taxon>
        <taxon>Cryptococcus neoformans species complex</taxon>
    </lineage>
</organism>
<name>RL44_CRYNB</name>
<keyword id="KW-0046">Antibiotic resistance</keyword>
<keyword id="KW-0196">Cycloheximide resistance</keyword>
<keyword id="KW-0687">Ribonucleoprotein</keyword>
<keyword id="KW-0689">Ribosomal protein</keyword>
<dbReference type="EMBL" id="AF118148">
    <property type="protein sequence ID" value="AAG48930.1"/>
    <property type="molecule type" value="Genomic_DNA"/>
</dbReference>
<dbReference type="EMBL" id="AAEY01000048">
    <property type="status" value="NOT_ANNOTATED_CDS"/>
    <property type="molecule type" value="Genomic_DNA"/>
</dbReference>
<dbReference type="SMR" id="P0CQ51"/>
<dbReference type="EnsemblFungi" id="AAW45874">
    <property type="protein sequence ID" value="AAW45874"/>
    <property type="gene ID" value="CNJ03120"/>
</dbReference>
<dbReference type="GO" id="GO:1990904">
    <property type="term" value="C:ribonucleoprotein complex"/>
    <property type="evidence" value="ECO:0007669"/>
    <property type="project" value="UniProtKB-KW"/>
</dbReference>
<dbReference type="GO" id="GO:0005840">
    <property type="term" value="C:ribosome"/>
    <property type="evidence" value="ECO:0007669"/>
    <property type="project" value="UniProtKB-KW"/>
</dbReference>
<dbReference type="GO" id="GO:0003735">
    <property type="term" value="F:structural constituent of ribosome"/>
    <property type="evidence" value="ECO:0007669"/>
    <property type="project" value="InterPro"/>
</dbReference>
<dbReference type="GO" id="GO:0046677">
    <property type="term" value="P:response to antibiotic"/>
    <property type="evidence" value="ECO:0007669"/>
    <property type="project" value="UniProtKB-KW"/>
</dbReference>
<dbReference type="GO" id="GO:0046898">
    <property type="term" value="P:response to cycloheximide"/>
    <property type="evidence" value="ECO:0007669"/>
    <property type="project" value="UniProtKB-KW"/>
</dbReference>
<dbReference type="GO" id="GO:0006412">
    <property type="term" value="P:translation"/>
    <property type="evidence" value="ECO:0007669"/>
    <property type="project" value="InterPro"/>
</dbReference>
<dbReference type="FunFam" id="3.10.450.80:FF:000001">
    <property type="entry name" value="60S ribosomal protein L44"/>
    <property type="match status" value="1"/>
</dbReference>
<dbReference type="Gene3D" id="3.10.450.80">
    <property type="match status" value="1"/>
</dbReference>
<dbReference type="InterPro" id="IPR000552">
    <property type="entry name" value="Ribosomal_eL44"/>
</dbReference>
<dbReference type="InterPro" id="IPR053708">
    <property type="entry name" value="Ribosomal_LSU_eL42"/>
</dbReference>
<dbReference type="InterPro" id="IPR011332">
    <property type="entry name" value="Ribosomal_zn-bd"/>
</dbReference>
<dbReference type="PANTHER" id="PTHR10369">
    <property type="entry name" value="60S RIBOSOMAL PROTEIN L36A/L44"/>
    <property type="match status" value="1"/>
</dbReference>
<dbReference type="Pfam" id="PF00935">
    <property type="entry name" value="Ribosomal_L44"/>
    <property type="match status" value="1"/>
</dbReference>
<dbReference type="SUPFAM" id="SSF57829">
    <property type="entry name" value="Zn-binding ribosomal proteins"/>
    <property type="match status" value="1"/>
</dbReference>
<dbReference type="PROSITE" id="PS01172">
    <property type="entry name" value="RIBOSOMAL_L44E"/>
    <property type="match status" value="1"/>
</dbReference>
<protein>
    <recommendedName>
        <fullName evidence="3">Large ribosomal subunit protein eL42</fullName>
    </recommendedName>
    <alternativeName>
        <fullName>60S ribosomal protein L41</fullName>
    </alternativeName>
    <alternativeName>
        <fullName>60S ribosomal protein L44</fullName>
    </alternativeName>
</protein>
<proteinExistence type="inferred from homology"/>